<feature type="signal peptide" evidence="1">
    <location>
        <begin position="1"/>
        <end position="16"/>
    </location>
</feature>
<feature type="chain" id="PRO_0000251201" description="Uncharacterized protein C1orf54 homolog">
    <location>
        <begin position="17"/>
        <end position="148"/>
    </location>
</feature>
<feature type="region of interest" description="Disordered" evidence="2">
    <location>
        <begin position="91"/>
        <end position="125"/>
    </location>
</feature>
<feature type="compositionally biased region" description="Low complexity" evidence="2">
    <location>
        <begin position="96"/>
        <end position="116"/>
    </location>
</feature>
<feature type="glycosylation site" description="N-linked (GlcNAc...) asparagine" evidence="1">
    <location>
        <position position="50"/>
    </location>
</feature>
<feature type="splice variant" id="VSP_020746" description="In isoform 2." evidence="3">
    <location>
        <position position="117"/>
    </location>
</feature>
<proteinExistence type="evidence at transcript level"/>
<protein>
    <recommendedName>
        <fullName>Uncharacterized protein C1orf54 homolog</fullName>
    </recommendedName>
    <alternativeName>
        <fullName>Protein L259</fullName>
    </alternativeName>
</protein>
<sequence length="148" mass="16823">MDVLFIALLVAPLILGQEYDHEEQLEEGDYYQVAYYYYTVTPNYDDFSVNFTVDYSVFESEDRLNRLNKEVTTTEAVETTASSYSLHTELMDPQNPVTTKPVTTEPVTTEPVTTEPQSPNQNDAMSTLQSPVSCFLLWTLLQGGVHFM</sequence>
<keyword id="KW-0025">Alternative splicing</keyword>
<keyword id="KW-0325">Glycoprotein</keyword>
<keyword id="KW-1185">Reference proteome</keyword>
<keyword id="KW-0964">Secreted</keyword>
<keyword id="KW-0732">Signal</keyword>
<dbReference type="EMBL" id="AF534879">
    <property type="protein sequence ID" value="AAN03482.1"/>
    <property type="molecule type" value="mRNA"/>
</dbReference>
<dbReference type="EMBL" id="BC028528">
    <property type="protein sequence ID" value="AAH28528.1"/>
    <property type="molecule type" value="mRNA"/>
</dbReference>
<dbReference type="CCDS" id="CCDS50998.1">
    <molecule id="Q8R2K8-1"/>
</dbReference>
<dbReference type="CCDS" id="CCDS84656.1">
    <molecule id="Q8R2K8-2"/>
</dbReference>
<dbReference type="RefSeq" id="NP_001333443.1">
    <molecule id="Q8R2K8-2"/>
    <property type="nucleotide sequence ID" value="NM_001346514.2"/>
</dbReference>
<dbReference type="RefSeq" id="NP_705733.2">
    <molecule id="Q8R2K8-1"/>
    <property type="nucleotide sequence ID" value="NM_153513.4"/>
</dbReference>
<dbReference type="STRING" id="10090.ENSMUSP00000102749"/>
<dbReference type="GlyGen" id="Q8R2K8">
    <property type="glycosylation" value="2 sites"/>
</dbReference>
<dbReference type="PhosphoSitePlus" id="Q8R2K8"/>
<dbReference type="PaxDb" id="10090-ENSMUSP00000102749"/>
<dbReference type="Antibodypedia" id="20279">
    <property type="antibodies" value="69 antibodies from 11 providers"/>
</dbReference>
<dbReference type="DNASU" id="229600"/>
<dbReference type="Ensembl" id="ENSMUST00000036360.13">
    <molecule id="Q8R2K8-2"/>
    <property type="protein sequence ID" value="ENSMUSP00000046810.7"/>
    <property type="gene ID" value="ENSMUSG00000038543.14"/>
</dbReference>
<dbReference type="Ensembl" id="ENSMUST00000090476.10">
    <molecule id="Q8R2K8-1"/>
    <property type="protein sequence ID" value="ENSMUSP00000102749.2"/>
    <property type="gene ID" value="ENSMUSG00000038543.14"/>
</dbReference>
<dbReference type="Ensembl" id="ENSMUST00000171519.2">
    <molecule id="Q8R2K8-1"/>
    <property type="protein sequence ID" value="ENSMUSP00000127666.2"/>
    <property type="gene ID" value="ENSMUSG00000038543.14"/>
</dbReference>
<dbReference type="GeneID" id="229600"/>
<dbReference type="KEGG" id="mmu:229600"/>
<dbReference type="UCSC" id="uc008qln.3">
    <molecule id="Q8R2K8-2"/>
    <property type="organism name" value="mouse"/>
</dbReference>
<dbReference type="UCSC" id="uc008qlo.2">
    <molecule id="Q8R2K8-1"/>
    <property type="organism name" value="mouse"/>
</dbReference>
<dbReference type="AGR" id="MGI:2385885"/>
<dbReference type="MGI" id="MGI:2385885">
    <property type="gene designation" value="BC028528"/>
</dbReference>
<dbReference type="VEuPathDB" id="HostDB:ENSMUSG00000038543"/>
<dbReference type="eggNOG" id="ENOG502RVU7">
    <property type="taxonomic scope" value="Eukaryota"/>
</dbReference>
<dbReference type="GeneTree" id="ENSGT00390000003103"/>
<dbReference type="HOGENOM" id="CLU_130480_0_0_1"/>
<dbReference type="InParanoid" id="Q8R2K8"/>
<dbReference type="OMA" id="MTVEPQS"/>
<dbReference type="OrthoDB" id="9834409at2759"/>
<dbReference type="PhylomeDB" id="Q8R2K8"/>
<dbReference type="TreeFam" id="TF336874"/>
<dbReference type="BioGRID-ORCS" id="229600">
    <property type="hits" value="4 hits in 76 CRISPR screens"/>
</dbReference>
<dbReference type="PRO" id="PR:Q8R2K8"/>
<dbReference type="Proteomes" id="UP000000589">
    <property type="component" value="Chromosome 3"/>
</dbReference>
<dbReference type="RNAct" id="Q8R2K8">
    <property type="molecule type" value="protein"/>
</dbReference>
<dbReference type="Bgee" id="ENSMUSG00000038543">
    <property type="expression patterns" value="Expressed in right lung lobe and 192 other cell types or tissues"/>
</dbReference>
<dbReference type="GO" id="GO:0005576">
    <property type="term" value="C:extracellular region"/>
    <property type="evidence" value="ECO:0007669"/>
    <property type="project" value="UniProtKB-SubCell"/>
</dbReference>
<dbReference type="GO" id="GO:2001013">
    <property type="term" value="P:epithelial cell proliferation involved in renal tubule morphogenesis"/>
    <property type="evidence" value="ECO:0000314"/>
    <property type="project" value="MGI"/>
</dbReference>
<dbReference type="GO" id="GO:0043491">
    <property type="term" value="P:phosphatidylinositol 3-kinase/protein kinase B signal transduction"/>
    <property type="evidence" value="ECO:0000315"/>
    <property type="project" value="MGI"/>
</dbReference>
<dbReference type="GO" id="GO:0009611">
    <property type="term" value="P:response to wounding"/>
    <property type="evidence" value="ECO:0000314"/>
    <property type="project" value="MGI"/>
</dbReference>
<dbReference type="InterPro" id="IPR027957">
    <property type="entry name" value="DUF4634"/>
</dbReference>
<dbReference type="PANTHER" id="PTHR37870">
    <property type="entry name" value="CHROMOSOME 1 OPEN READING FRAME 54"/>
    <property type="match status" value="1"/>
</dbReference>
<dbReference type="PANTHER" id="PTHR37870:SF1">
    <property type="entry name" value="CHROMOSOME 2 C1ORF54 HOMOLOG"/>
    <property type="match status" value="1"/>
</dbReference>
<dbReference type="Pfam" id="PF15465">
    <property type="entry name" value="DUF4634"/>
    <property type="match status" value="1"/>
</dbReference>
<reference key="1">
    <citation type="submission" date="2002-08" db="EMBL/GenBank/DDBJ databases">
        <authorList>
            <person name="Han S.H."/>
            <person name="Choi I.P."/>
        </authorList>
    </citation>
    <scope>NUCLEOTIDE SEQUENCE [MRNA] (ISOFORM 1)</scope>
</reference>
<reference key="2">
    <citation type="journal article" date="2004" name="Genome Res.">
        <title>The status, quality, and expansion of the NIH full-length cDNA project: the Mammalian Gene Collection (MGC).</title>
        <authorList>
            <consortium name="The MGC Project Team"/>
        </authorList>
    </citation>
    <scope>NUCLEOTIDE SEQUENCE [LARGE SCALE MRNA] (ISOFORM 2)</scope>
    <source>
        <strain>C57BL/6J</strain>
        <tissue>Mammary gland</tissue>
    </source>
</reference>
<comment type="subcellular location">
    <subcellularLocation>
        <location evidence="4">Secreted</location>
    </subcellularLocation>
</comment>
<comment type="alternative products">
    <event type="alternative splicing"/>
    <isoform>
        <id>Q8R2K8-1</id>
        <name>1</name>
        <sequence type="displayed"/>
    </isoform>
    <isoform>
        <id>Q8R2K8-2</id>
        <name>2</name>
        <sequence type="described" ref="VSP_020746"/>
    </isoform>
</comment>
<organism>
    <name type="scientific">Mus musculus</name>
    <name type="common">Mouse</name>
    <dbReference type="NCBI Taxonomy" id="10090"/>
    <lineage>
        <taxon>Eukaryota</taxon>
        <taxon>Metazoa</taxon>
        <taxon>Chordata</taxon>
        <taxon>Craniata</taxon>
        <taxon>Vertebrata</taxon>
        <taxon>Euteleostomi</taxon>
        <taxon>Mammalia</taxon>
        <taxon>Eutheria</taxon>
        <taxon>Euarchontoglires</taxon>
        <taxon>Glires</taxon>
        <taxon>Rodentia</taxon>
        <taxon>Myomorpha</taxon>
        <taxon>Muroidea</taxon>
        <taxon>Muridae</taxon>
        <taxon>Murinae</taxon>
        <taxon>Mus</taxon>
        <taxon>Mus</taxon>
    </lineage>
</organism>
<evidence type="ECO:0000255" key="1"/>
<evidence type="ECO:0000256" key="2">
    <source>
        <dbReference type="SAM" id="MobiDB-lite"/>
    </source>
</evidence>
<evidence type="ECO:0000303" key="3">
    <source>
    </source>
</evidence>
<evidence type="ECO:0000305" key="4"/>
<name>CA054_MOUSE</name>
<accession>Q8R2K8</accession>
<accession>Q8K3T8</accession>